<reference key="1">
    <citation type="journal article" date="2001" name="J. Virol.">
        <title>Rat CRM1 is responsible for the poor activity of human T-cell leukemia virus type 1 Rex protein in rat cells.</title>
        <authorList>
            <person name="Hakata Y."/>
            <person name="Yamada M."/>
            <person name="Shida H."/>
        </authorList>
    </citation>
    <scope>NUCLEOTIDE SEQUENCE [MRNA]</scope>
    <source>
        <tissue>Heart</tissue>
    </source>
</reference>
<reference key="2">
    <citation type="journal article" date="2006" name="Proc. Natl. Acad. Sci. U.S.A.">
        <title>Quantitative phosphoproteomics of vasopressin-sensitive renal cells: regulation of aquaporin-2 phosphorylation at two sites.</title>
        <authorList>
            <person name="Hoffert J.D."/>
            <person name="Pisitkun T."/>
            <person name="Wang G."/>
            <person name="Shen R.-F."/>
            <person name="Knepper M.A."/>
        </authorList>
    </citation>
    <scope>PHOSPHORYLATION [LARGE SCALE ANALYSIS] AT THR-448; SER-450 AND TYR-454</scope>
    <scope>IDENTIFICATION BY MASS SPECTROMETRY [LARGE SCALE ANALYSIS]</scope>
</reference>
<reference key="3">
    <citation type="journal article" date="2012" name="Nat. Commun.">
        <title>Quantitative maps of protein phosphorylation sites across 14 different rat organs and tissues.</title>
        <authorList>
            <person name="Lundby A."/>
            <person name="Secher A."/>
            <person name="Lage K."/>
            <person name="Nordsborg N.B."/>
            <person name="Dmytriyev A."/>
            <person name="Lundby C."/>
            <person name="Olsen J.V."/>
        </authorList>
    </citation>
    <scope>PHOSPHORYLATION [LARGE SCALE ANALYSIS] AT SER-966</scope>
    <scope>IDENTIFICATION BY MASS SPECTROMETRY [LARGE SCALE ANALYSIS]</scope>
</reference>
<organism>
    <name type="scientific">Rattus norvegicus</name>
    <name type="common">Rat</name>
    <dbReference type="NCBI Taxonomy" id="10116"/>
    <lineage>
        <taxon>Eukaryota</taxon>
        <taxon>Metazoa</taxon>
        <taxon>Chordata</taxon>
        <taxon>Craniata</taxon>
        <taxon>Vertebrata</taxon>
        <taxon>Euteleostomi</taxon>
        <taxon>Mammalia</taxon>
        <taxon>Eutheria</taxon>
        <taxon>Euarchontoglires</taxon>
        <taxon>Glires</taxon>
        <taxon>Rodentia</taxon>
        <taxon>Myomorpha</taxon>
        <taxon>Muroidea</taxon>
        <taxon>Muridae</taxon>
        <taxon>Murinae</taxon>
        <taxon>Rattus</taxon>
    </lineage>
</organism>
<comment type="function">
    <text evidence="1">Mediates the nuclear export of cellular proteins (cargos) bearing a leucine-rich nuclear export signal (NES) and of RNAs. In the nucleus, in association with RANBP3, binds cooperatively to the NES on its target protein and to the GTPase Ran in its active GTP-bound form. Docking of this complex to the nuclear pore complex (NPC) is mediated through binding to nucleoporins. Upon transit of a nuclear export complex into the cytoplasm, disassembling of the complex and hydrolysis of Ran-GTP to Ran-GDP (induced by RANBP1 and RANGAP1, respectively) cause release of the cargo from the export receptor. The directionality of nuclear export is thought to be conferred by an asymmetric distribution of the GTP- and GDP-bound forms of Ran between the cytoplasm and nucleus. Involved in U3 snoRNA transport from Cajal bodies to nucleoli. Binds to late precursor U3 snoRNA bearing a TMG cap (By similarity).</text>
</comment>
<comment type="subunit">
    <text evidence="2 3">Found in a U snRNA export complex with PHAX/RNUXA, NCBP1/CBP80, NCBP2/CBP20, RAN, XPO1 and m7G-capped RNA. Component of a nuclear export receptor complex composed of KPNB1, RAN, SNUPN and XPO1. Found in a trimeric export complex with SNUPN, RAN and XPO1. Found in a nuclear export complex with RANBP3 and RAN. Found in a 60S ribosomal subunit export complex with NMD3, RAN, XPO1. Interacts with DDX3X, NMD3, NUP42, NUP88, NUP214, RANBP3 and TERT. Interacts with NEMF (via its N-terminus). Interacts with the monomeric form of BIRC5/survivin deacetylated at 'Lys-129'. Interacts with DTNBP1 and SERTAD2; the interactions translocate DTNBP1 and SERTAD2 out of the nucleus. Interacts with ATF2. Interacts with SLC35G1 and STIM1. Interacts with DCAF8. Interacts with CPEB3. Interacts with HAX1. Interacts with BOK; translocates to the cytoplasm (By similarity). Interacts with HSP90AB1 (By similarity). Interacts with LRPPRC; interacts with LRPPRC alone and also when LRPPRC is in complex with EIF4E and with EIF4E sensitivity element (4ESE)-containing mRNAs to form an EIF4E-dependent mRNA export complex (By similarity).</text>
</comment>
<comment type="interaction">
    <interactant intactId="EBI-9517348">
        <id>Q80U96</id>
    </interactant>
    <interactant intactId="EBI-9673535">
        <id>P0DJZ2</id>
        <label>NS2</label>
    </interactant>
    <organismsDiffer>true</organismsDiffer>
    <experiments>2</experiments>
</comment>
<comment type="subcellular location">
    <subcellularLocation>
        <location evidence="1">Cytoplasm</location>
    </subcellularLocation>
    <subcellularLocation>
        <location evidence="1">Nucleus</location>
        <location evidence="1">Nucleoplasm</location>
    </subcellularLocation>
    <subcellularLocation>
        <location evidence="1">Nucleus</location>
        <location evidence="1">Cajal body</location>
    </subcellularLocation>
    <subcellularLocation>
        <location evidence="1">Nucleus</location>
        <location evidence="1">Nucleolus</location>
    </subcellularLocation>
    <text evidence="1">Located in the nucleoplasm, Cajal bodies and nucleoli. Shuttles between the nucleus/nucleolus and the cytoplasm (By similarity).</text>
</comment>
<comment type="similarity">
    <text evidence="5">Belongs to the exportin family.</text>
</comment>
<protein>
    <recommendedName>
        <fullName>Exportin-1</fullName>
        <shortName>Exp1</shortName>
    </recommendedName>
    <alternativeName>
        <fullName>Chromosome region maintenance 1 protein homolog</fullName>
    </alternativeName>
</protein>
<accession>Q80U96</accession>
<name>XPO1_RAT</name>
<feature type="chain" id="PRO_0000204707" description="Exportin-1">
    <location>
        <begin position="1"/>
        <end position="1071"/>
    </location>
</feature>
<feature type="domain" description="Importin N-terminal" evidence="4">
    <location>
        <begin position="46"/>
        <end position="112"/>
    </location>
</feature>
<feature type="repeat" description="HEAT 1">
    <location>
        <begin position="217"/>
        <end position="240"/>
    </location>
</feature>
<feature type="repeat" description="HEAT 2">
    <location>
        <begin position="241"/>
        <end position="277"/>
    </location>
</feature>
<feature type="repeat" description="HEAT 3">
    <location>
        <begin position="354"/>
        <end position="472"/>
    </location>
</feature>
<feature type="repeat" description="HEAT 4">
    <location>
        <begin position="515"/>
        <end position="553"/>
    </location>
</feature>
<feature type="repeat" description="HEAT 5">
    <location>
        <begin position="560"/>
        <end position="597"/>
    </location>
</feature>
<feature type="repeat" description="HEAT 6">
    <location>
        <begin position="602"/>
        <end position="639"/>
    </location>
</feature>
<feature type="repeat" description="HEAT 7">
    <location>
        <begin position="775"/>
        <end position="813"/>
    </location>
</feature>
<feature type="repeat" description="HEAT 8">
    <location>
        <begin position="885"/>
        <end position="916"/>
    </location>
</feature>
<feature type="repeat" description="HEAT 9">
    <location>
        <begin position="917"/>
        <end position="954"/>
    </location>
</feature>
<feature type="repeat" description="HEAT 10">
    <location>
        <begin position="1002"/>
        <end position="1039"/>
    </location>
</feature>
<feature type="region of interest" description="Necessary for interaction with Ran and nuclear export complex formation" evidence="1">
    <location>
        <begin position="327"/>
        <end position="450"/>
    </location>
</feature>
<feature type="region of interest" description="Necessary for interaction with RANBP3" evidence="1">
    <location>
        <begin position="411"/>
        <end position="481"/>
    </location>
</feature>
<feature type="modified residue" description="Phosphoserine" evidence="2">
    <location>
        <position position="391"/>
    </location>
</feature>
<feature type="modified residue" description="N6-acetyllysine" evidence="2">
    <location>
        <position position="446"/>
    </location>
</feature>
<feature type="modified residue" description="Phosphothreonine" evidence="6">
    <location>
        <position position="448"/>
    </location>
</feature>
<feature type="modified residue" description="Phosphoserine" evidence="6">
    <location>
        <position position="450"/>
    </location>
</feature>
<feature type="modified residue" description="Phosphotyrosine" evidence="6">
    <location>
        <position position="454"/>
    </location>
</feature>
<feature type="modified residue" description="N6-acetyllysine" evidence="2">
    <location>
        <position position="693"/>
    </location>
</feature>
<feature type="modified residue" description="Phosphoserine" evidence="7">
    <location>
        <position position="966"/>
    </location>
</feature>
<feature type="modified residue" description="Phosphoserine" evidence="2">
    <location>
        <position position="1031"/>
    </location>
</feature>
<sequence length="1071" mass="123039">MPAIMTMLADHAARQLLDFSQKLDINLLDNVVNCLYHGEGAQQRMAQEVLTHLKEHPDAWTRVDTILEFSQNMNTKYYGLQILENVIKTRWKILPRNQCEGIKKYVVGLIIKTSSDPTCVEKEKVYIGKLNMILVQILKQEWPKHWPTFISDIVGASRTSESLCQNNMVILKLLSEEVFDFSSGQITQVKAKHLKDSMCNEFSQIFQLCQFVMENSQNAPLVHATLETLLRFLNWIPLGYIFETKLISTLIYKFLNVPMFRNVSLKCLTEIAGVSVSQYEEQFETLFTLTMMQLKQMLPLNTNIRLAYSNGKDDEQNFIQNLSLFLCTFLKEHGQLLEKRLNLREALMEALHYMLLVSEVEETEIFKICLEYWNHLAAELYRESPFSTSASPLLSGSQHFDIPPRRQLYLTVLSKVRLLMVSRMAKPEEVLVVENDQGEVVREFMKDTDSINLYKNMRETLVYLTHLDYVDTEIIMTKKLQNQVNGTEWSWKNLNTLCWAIGSISGAMHEEDEKRFLVTVIKDLLGLCEQKRGKDNKAIIASNIMYIVGQYPRFLRAHWKFLKTVVNKLFEFMHETHDGVQDMACDTFIKIAQKCRRHFVQVQVGEVMPFIDEILNNINTIICDLQPQQVHTFYEAVGYMIGAQTDQTVQEHLIEKYMLLPNQVWDSIIQQATKNVDILKDPETVKQLGSILKTNVRACKAVGHPFVIQLGRIYLDMLNVYKCLSENISAAIQANGEMVTKQPLIRSMRTVKRETLKLISGWVSRSNDPQMVAENFVPPLLDAVLIDYQRNVPAAREPEVLSTMAIIVNKLGGHITAEIPQIFDAVFECTLNMINKDFEEYPEHRTNFFLLLQAVNSHCFPAFLAIPPAQFKLVLDSIIWAFKHTMRNVADTGLQILFTLLQNVAQEEAAAQSFYQTYFCDILQHIFSVVTDTSHTAGLTMHASILAYMFNLVEEGKISTPLNPGSPVSNQMFIQDYVANLLKSAFPHLQDAQVKLFVTGLFSLNQDIPAFKEHLRDFLVQIKEFAGEDTSDLFLEERETALRQAQEEKHKLQMSVPGILNPHEIPEEMCD</sequence>
<dbReference type="EMBL" id="AB105193">
    <property type="protein sequence ID" value="BAC65240.1"/>
    <property type="molecule type" value="mRNA"/>
</dbReference>
<dbReference type="RefSeq" id="NP_445942.1">
    <property type="nucleotide sequence ID" value="NM_053490.2"/>
</dbReference>
<dbReference type="RefSeq" id="XP_006251640.1">
    <property type="nucleotide sequence ID" value="XM_006251578.3"/>
</dbReference>
<dbReference type="SMR" id="Q80U96"/>
<dbReference type="FunCoup" id="Q80U96">
    <property type="interactions" value="5333"/>
</dbReference>
<dbReference type="IntAct" id="Q80U96">
    <property type="interactions" value="1"/>
</dbReference>
<dbReference type="STRING" id="10116.ENSRNOP00000014062"/>
<dbReference type="iPTMnet" id="Q80U96"/>
<dbReference type="PhosphoSitePlus" id="Q80U96"/>
<dbReference type="SwissPalm" id="Q80U96"/>
<dbReference type="jPOST" id="Q80U96"/>
<dbReference type="PaxDb" id="10116-ENSRNOP00000014062"/>
<dbReference type="GeneID" id="85252"/>
<dbReference type="KEGG" id="rno:85252"/>
<dbReference type="UCSC" id="RGD:620517">
    <property type="organism name" value="rat"/>
</dbReference>
<dbReference type="AGR" id="RGD:620517"/>
<dbReference type="CTD" id="7514"/>
<dbReference type="RGD" id="620517">
    <property type="gene designation" value="Xpo1"/>
</dbReference>
<dbReference type="VEuPathDB" id="HostDB:ENSRNOG00000009935"/>
<dbReference type="eggNOG" id="KOG2020">
    <property type="taxonomic scope" value="Eukaryota"/>
</dbReference>
<dbReference type="HOGENOM" id="CLU_011906_0_0_1"/>
<dbReference type="InParanoid" id="Q80U96"/>
<dbReference type="OrthoDB" id="27218at2759"/>
<dbReference type="PhylomeDB" id="Q80U96"/>
<dbReference type="TreeFam" id="TF105695"/>
<dbReference type="Reactome" id="R-RNO-141444">
    <property type="pathway name" value="Amplification of signal from unattached kinetochores via a MAD2 inhibitory signal"/>
</dbReference>
<dbReference type="Reactome" id="R-RNO-2467813">
    <property type="pathway name" value="Separation of Sister Chromatids"/>
</dbReference>
<dbReference type="Reactome" id="R-RNO-2500257">
    <property type="pathway name" value="Resolution of Sister Chromatid Cohesion"/>
</dbReference>
<dbReference type="Reactome" id="R-RNO-3769402">
    <property type="pathway name" value="Deactivation of the beta-catenin transactivating complex"/>
</dbReference>
<dbReference type="Reactome" id="R-RNO-450520">
    <property type="pathway name" value="HuR (ELAVL1) binds and stabilizes mRNA"/>
</dbReference>
<dbReference type="Reactome" id="R-RNO-5663220">
    <property type="pathway name" value="RHO GTPases Activate Formins"/>
</dbReference>
<dbReference type="Reactome" id="R-RNO-5687128">
    <property type="pathway name" value="MAPK6/MAPK4 signaling"/>
</dbReference>
<dbReference type="Reactome" id="R-RNO-68877">
    <property type="pathway name" value="Mitotic Prometaphase"/>
</dbReference>
<dbReference type="Reactome" id="R-RNO-69273">
    <property type="pathway name" value="Cyclin A/B1/B2 associated events during G2/M transition"/>
</dbReference>
<dbReference type="Reactome" id="R-RNO-9634638">
    <property type="pathway name" value="Estrogen-dependent nuclear events downstream of ESR-membrane signaling"/>
</dbReference>
<dbReference type="Reactome" id="R-RNO-9648025">
    <property type="pathway name" value="EML4 and NUDC in mitotic spindle formation"/>
</dbReference>
<dbReference type="Reactome" id="R-RNO-9707616">
    <property type="pathway name" value="Heme signaling"/>
</dbReference>
<dbReference type="Reactome" id="R-RNO-9856649">
    <property type="pathway name" value="Transcriptional and post-translational regulation of MITF-M expression and activity"/>
</dbReference>
<dbReference type="PRO" id="PR:Q80U96"/>
<dbReference type="Proteomes" id="UP000002494">
    <property type="component" value="Chromosome 14"/>
</dbReference>
<dbReference type="Bgee" id="ENSRNOG00000009935">
    <property type="expression patterns" value="Expressed in thymus and 20 other cell types or tissues"/>
</dbReference>
<dbReference type="GO" id="GO:0005642">
    <property type="term" value="C:annulate lamellae"/>
    <property type="evidence" value="ECO:0000266"/>
    <property type="project" value="RGD"/>
</dbReference>
<dbReference type="GO" id="GO:0015030">
    <property type="term" value="C:Cajal body"/>
    <property type="evidence" value="ECO:0007669"/>
    <property type="project" value="UniProtKB-SubCell"/>
</dbReference>
<dbReference type="GO" id="GO:0005737">
    <property type="term" value="C:cytoplasm"/>
    <property type="evidence" value="ECO:0000266"/>
    <property type="project" value="RGD"/>
</dbReference>
<dbReference type="GO" id="GO:0005829">
    <property type="term" value="C:cytosol"/>
    <property type="evidence" value="ECO:0007669"/>
    <property type="project" value="Ensembl"/>
</dbReference>
<dbReference type="GO" id="GO:0000776">
    <property type="term" value="C:kinetochore"/>
    <property type="evidence" value="ECO:0000250"/>
    <property type="project" value="UniProtKB"/>
</dbReference>
<dbReference type="GO" id="GO:0031965">
    <property type="term" value="C:nuclear membrane"/>
    <property type="evidence" value="ECO:0007669"/>
    <property type="project" value="Ensembl"/>
</dbReference>
<dbReference type="GO" id="GO:0005730">
    <property type="term" value="C:nucleolus"/>
    <property type="evidence" value="ECO:0000266"/>
    <property type="project" value="RGD"/>
</dbReference>
<dbReference type="GO" id="GO:0005634">
    <property type="term" value="C:nucleus"/>
    <property type="evidence" value="ECO:0000266"/>
    <property type="project" value="RGD"/>
</dbReference>
<dbReference type="GO" id="GO:0032991">
    <property type="term" value="C:protein-containing complex"/>
    <property type="evidence" value="ECO:0000266"/>
    <property type="project" value="RGD"/>
</dbReference>
<dbReference type="GO" id="GO:1990904">
    <property type="term" value="C:ribonucleoprotein complex"/>
    <property type="evidence" value="ECO:0000266"/>
    <property type="project" value="RGD"/>
</dbReference>
<dbReference type="GO" id="GO:0140297">
    <property type="term" value="F:DNA-binding transcription factor binding"/>
    <property type="evidence" value="ECO:0000353"/>
    <property type="project" value="RGD"/>
</dbReference>
<dbReference type="GO" id="GO:0005049">
    <property type="term" value="F:nuclear export signal receptor activity"/>
    <property type="evidence" value="ECO:0000266"/>
    <property type="project" value="RGD"/>
</dbReference>
<dbReference type="GO" id="GO:0019904">
    <property type="term" value="F:protein domain specific binding"/>
    <property type="evidence" value="ECO:0000353"/>
    <property type="project" value="RGD"/>
</dbReference>
<dbReference type="GO" id="GO:0003723">
    <property type="term" value="F:RNA binding"/>
    <property type="evidence" value="ECO:0007669"/>
    <property type="project" value="UniProtKB-KW"/>
</dbReference>
<dbReference type="GO" id="GO:0031267">
    <property type="term" value="F:small GTPase binding"/>
    <property type="evidence" value="ECO:0007669"/>
    <property type="project" value="InterPro"/>
</dbReference>
<dbReference type="GO" id="GO:1902075">
    <property type="term" value="P:cellular response to salt"/>
    <property type="evidence" value="ECO:0000270"/>
    <property type="project" value="RGD"/>
</dbReference>
<dbReference type="GO" id="GO:0071401">
    <property type="term" value="P:cellular response to triglyceride"/>
    <property type="evidence" value="ECO:0000270"/>
    <property type="project" value="RGD"/>
</dbReference>
<dbReference type="GO" id="GO:0006406">
    <property type="term" value="P:mRNA export from nucleus"/>
    <property type="evidence" value="ECO:0000266"/>
    <property type="project" value="RGD"/>
</dbReference>
<dbReference type="GO" id="GO:0000122">
    <property type="term" value="P:negative regulation of transcription by RNA polymerase II"/>
    <property type="evidence" value="ECO:0000315"/>
    <property type="project" value="RGD"/>
</dbReference>
<dbReference type="GO" id="GO:0006913">
    <property type="term" value="P:nucleocytoplasmic transport"/>
    <property type="evidence" value="ECO:0000266"/>
    <property type="project" value="RGD"/>
</dbReference>
<dbReference type="GO" id="GO:0006611">
    <property type="term" value="P:protein export from nucleus"/>
    <property type="evidence" value="ECO:0000314"/>
    <property type="project" value="RGD"/>
</dbReference>
<dbReference type="GO" id="GO:0034504">
    <property type="term" value="P:protein localization to nucleus"/>
    <property type="evidence" value="ECO:0000266"/>
    <property type="project" value="RGD"/>
</dbReference>
<dbReference type="GO" id="GO:0010824">
    <property type="term" value="P:regulation of centrosome duplication"/>
    <property type="evidence" value="ECO:0000266"/>
    <property type="project" value="RGD"/>
</dbReference>
<dbReference type="GO" id="GO:0032434">
    <property type="term" value="P:regulation of proteasomal ubiquitin-dependent protein catabolic process"/>
    <property type="evidence" value="ECO:0000266"/>
    <property type="project" value="RGD"/>
</dbReference>
<dbReference type="GO" id="GO:0042176">
    <property type="term" value="P:regulation of protein catabolic process"/>
    <property type="evidence" value="ECO:0000266"/>
    <property type="project" value="RGD"/>
</dbReference>
<dbReference type="GO" id="GO:0046825">
    <property type="term" value="P:regulation of protein export from nucleus"/>
    <property type="evidence" value="ECO:0000266"/>
    <property type="project" value="RGD"/>
</dbReference>
<dbReference type="GO" id="GO:0009410">
    <property type="term" value="P:response to xenobiotic stimulus"/>
    <property type="evidence" value="ECO:0000270"/>
    <property type="project" value="RGD"/>
</dbReference>
<dbReference type="GO" id="GO:0000055">
    <property type="term" value="P:ribosomal large subunit export from nucleus"/>
    <property type="evidence" value="ECO:0000266"/>
    <property type="project" value="RGD"/>
</dbReference>
<dbReference type="GO" id="GO:0000056">
    <property type="term" value="P:ribosomal small subunit export from nucleus"/>
    <property type="evidence" value="ECO:0000266"/>
    <property type="project" value="RGD"/>
</dbReference>
<dbReference type="GO" id="GO:0000054">
    <property type="term" value="P:ribosomal subunit export from nucleus"/>
    <property type="evidence" value="ECO:0000266"/>
    <property type="project" value="RGD"/>
</dbReference>
<dbReference type="GO" id="GO:0042254">
    <property type="term" value="P:ribosome biogenesis"/>
    <property type="evidence" value="ECO:0000266"/>
    <property type="project" value="RGD"/>
</dbReference>
<dbReference type="FunFam" id="1.25.10.10:FF:001255">
    <property type="entry name" value="Exportin 1"/>
    <property type="match status" value="1"/>
</dbReference>
<dbReference type="Gene3D" id="1.25.10.10">
    <property type="entry name" value="Leucine-rich Repeat Variant"/>
    <property type="match status" value="1"/>
</dbReference>
<dbReference type="InterPro" id="IPR011989">
    <property type="entry name" value="ARM-like"/>
</dbReference>
<dbReference type="InterPro" id="IPR016024">
    <property type="entry name" value="ARM-type_fold"/>
</dbReference>
<dbReference type="InterPro" id="IPR041123">
    <property type="entry name" value="CRM1_repeat"/>
</dbReference>
<dbReference type="InterPro" id="IPR041235">
    <property type="entry name" value="Exp1_repeat_2"/>
</dbReference>
<dbReference type="InterPro" id="IPR013598">
    <property type="entry name" value="Exportin-1/Importin-b-like"/>
</dbReference>
<dbReference type="InterPro" id="IPR001494">
    <property type="entry name" value="Importin-beta_N"/>
</dbReference>
<dbReference type="InterPro" id="IPR045065">
    <property type="entry name" value="XPO1/5"/>
</dbReference>
<dbReference type="InterPro" id="IPR014877">
    <property type="entry name" value="XPO1_C_dom"/>
</dbReference>
<dbReference type="InterPro" id="IPR040485">
    <property type="entry name" value="XPO1_repeat_3"/>
</dbReference>
<dbReference type="PANTHER" id="PTHR11223">
    <property type="entry name" value="EXPORTIN 1/5"/>
    <property type="match status" value="1"/>
</dbReference>
<dbReference type="PANTHER" id="PTHR11223:SF2">
    <property type="entry name" value="EXPORTIN-1"/>
    <property type="match status" value="1"/>
</dbReference>
<dbReference type="Pfam" id="PF08767">
    <property type="entry name" value="CRM1_C"/>
    <property type="match status" value="1"/>
</dbReference>
<dbReference type="Pfam" id="PF18777">
    <property type="entry name" value="CRM1_repeat"/>
    <property type="match status" value="1"/>
</dbReference>
<dbReference type="Pfam" id="PF18784">
    <property type="entry name" value="CRM1_repeat_2"/>
    <property type="match status" value="1"/>
</dbReference>
<dbReference type="Pfam" id="PF18787">
    <property type="entry name" value="CRM1_repeat_3"/>
    <property type="match status" value="1"/>
</dbReference>
<dbReference type="Pfam" id="PF03810">
    <property type="entry name" value="IBN_N"/>
    <property type="match status" value="1"/>
</dbReference>
<dbReference type="Pfam" id="PF08389">
    <property type="entry name" value="Xpo1"/>
    <property type="match status" value="1"/>
</dbReference>
<dbReference type="SMART" id="SM01102">
    <property type="entry name" value="CRM1_C"/>
    <property type="match status" value="1"/>
</dbReference>
<dbReference type="SMART" id="SM00913">
    <property type="entry name" value="IBN_N"/>
    <property type="match status" value="1"/>
</dbReference>
<dbReference type="SUPFAM" id="SSF48371">
    <property type="entry name" value="ARM repeat"/>
    <property type="match status" value="2"/>
</dbReference>
<dbReference type="PROSITE" id="PS50166">
    <property type="entry name" value="IMPORTIN_B_NT"/>
    <property type="match status" value="1"/>
</dbReference>
<keyword id="KW-0007">Acetylation</keyword>
<keyword id="KW-0963">Cytoplasm</keyword>
<keyword id="KW-0509">mRNA transport</keyword>
<keyword id="KW-0539">Nucleus</keyword>
<keyword id="KW-0597">Phosphoprotein</keyword>
<keyword id="KW-0653">Protein transport</keyword>
<keyword id="KW-1185">Reference proteome</keyword>
<keyword id="KW-0677">Repeat</keyword>
<keyword id="KW-0694">RNA-binding</keyword>
<keyword id="KW-0813">Transport</keyword>
<proteinExistence type="evidence at protein level"/>
<evidence type="ECO:0000250" key="1"/>
<evidence type="ECO:0000250" key="2">
    <source>
        <dbReference type="UniProtKB" id="O14980"/>
    </source>
</evidence>
<evidence type="ECO:0000250" key="3">
    <source>
        <dbReference type="UniProtKB" id="Q6P5F9"/>
    </source>
</evidence>
<evidence type="ECO:0000255" key="4">
    <source>
        <dbReference type="PROSITE-ProRule" id="PRU00115"/>
    </source>
</evidence>
<evidence type="ECO:0000305" key="5"/>
<evidence type="ECO:0007744" key="6">
    <source>
    </source>
</evidence>
<evidence type="ECO:0007744" key="7">
    <source>
    </source>
</evidence>
<gene>
    <name type="primary">Xpo1</name>
    <name type="synonym">Crm1</name>
</gene>